<protein>
    <recommendedName>
        <fullName evidence="1">Matrix protein 1</fullName>
        <shortName evidence="1">M1</shortName>
    </recommendedName>
</protein>
<feature type="chain" id="PRO_0000223623" description="Matrix protein 1">
    <location>
        <begin position="1"/>
        <end position="252"/>
    </location>
</feature>
<feature type="region of interest" description="Membrane-binding" evidence="1">
    <location>
        <begin position="1"/>
        <end position="164"/>
    </location>
</feature>
<feature type="region of interest" description="RNP-binding" evidence="1">
    <location>
        <begin position="165"/>
        <end position="252"/>
    </location>
</feature>
<feature type="short sequence motif" description="Nuclear localization signal" evidence="1">
    <location>
        <begin position="101"/>
        <end position="105"/>
    </location>
</feature>
<feature type="sequence variant" description="In strain: Isolate A/Philippines/2/82/BS.">
    <original>V</original>
    <variation>I</variation>
    <location>
        <position position="15"/>
    </location>
</feature>
<feature type="sequence variant" description="In strain: Isolate A/Philippines/2/82/BS and Isolate mouse-adapted.">
    <original>A</original>
    <variation>V</variation>
    <location>
        <position position="41"/>
    </location>
</feature>
<feature type="sequence variant" description="In strain: Isolate A/Philippines/2/82/BS.">
    <original>T</original>
    <variation>M</variation>
    <location>
        <position position="43"/>
    </location>
</feature>
<feature type="sequence variant" description="In strain: Isolate A/Philippines/2/82/BS.">
    <original>R</original>
    <variation>K</variation>
    <location>
        <position position="95"/>
    </location>
</feature>
<feature type="sequence variant" description="In strain: Isolate A/Philippines/2/82/BS.">
    <original>A</original>
    <variation>S</variation>
    <location>
        <position position="116"/>
    </location>
</feature>
<feature type="sequence variant" description="In strain: Isolate mouse-adapted.">
    <original>F</original>
    <variation>L</variation>
    <location>
        <position position="144"/>
    </location>
</feature>
<feature type="sequence variant" description="In strain: Isolate A/Philippines/2/82/BS.">
    <original>A</original>
    <variation>T</variation>
    <location>
        <position position="167"/>
    </location>
</feature>
<feature type="sequence variant" description="In strain: Isolate A/Philippines/2/82/BS.">
    <original>A</original>
    <variation>T</variation>
    <location>
        <position position="218"/>
    </location>
</feature>
<feature type="sequence variant" description="In strain: Isolate A/Philippines/2/82/BS.">
    <original>D</original>
    <variation>N</variation>
    <location>
        <position position="231"/>
    </location>
</feature>
<feature type="sequence variant" description="In strain: Isolate A/Philippines/2/82/BS.">
    <original>T</original>
    <variation>A</variation>
    <location>
        <position position="239"/>
    </location>
</feature>
<comment type="function">
    <text evidence="1">Plays critical roles in virus replication, from virus entry and uncoating to assembly and budding of the virus particle. M1 binding to ribonucleocapsids (RNPs) in nucleus seems to inhibit viral transcription. Interaction of viral NEP with M1-RNP is thought to promote nuclear export of the complex, which is targeted to the virion assembly site at the apical plasma membrane in polarized epithelial cells. Interactions with NA and HA may bring M1, a non-raft-associated protein, into lipid rafts. Forms a continuous shell on the inner side of the lipid bilayer in virion, where it binds the RNP. During virus entry into cell, the M2 ion channel acidifies the internal virion core, inducing M1 dissociation from the RNP. M1-free RNPs are transported to the nucleus, where viral transcription and replication can take place.</text>
</comment>
<comment type="function">
    <text evidence="1">Determines the virion's shape: spherical or filamentous. Clinical isolates of influenza are characterized by the presence of significant proportion of filamentous virions, whereas after multiple passage on eggs or cell culture, virions have only spherical morphology. Filamentous virions are thought to be important to infect neighboring cells, and spherical virions more suited to spread through aerosol between hosts organisms.</text>
</comment>
<comment type="subunit">
    <text evidence="1">Homodimer and homomultimer. Interacts with NEP. Binds ribonucleocapsid by both interacting with genomic RNA and NP protein. May interact with HA and NA. Cannot bind NP without genomic RNA.</text>
</comment>
<comment type="subcellular location">
    <subcellularLocation>
        <location evidence="1">Virion membrane</location>
        <topology evidence="1">Peripheral membrane protein</topology>
        <orientation evidence="1">Cytoplasmic side</orientation>
    </subcellularLocation>
    <subcellularLocation>
        <location evidence="1">Host nucleus</location>
    </subcellularLocation>
</comment>
<comment type="alternative products">
    <event type="alternative splicing"/>
    <isoform>
        <id>Q8QV58-1</id>
        <name>M1</name>
        <sequence type="displayed"/>
    </isoform>
    <isoform>
        <id>Q8QV59-1</id>
        <name>M2</name>
        <sequence type="external"/>
    </isoform>
    <text>Only the first 9 residues are shared by the 2 isoforms.</text>
</comment>
<comment type="miscellaneous">
    <text evidence="1">Most abundant protein in virion. When expressed alone can form virus-like particles in transfected cells.</text>
</comment>
<comment type="similarity">
    <text evidence="1">Belongs to the influenza viruses Matrix protein M1 family.</text>
</comment>
<evidence type="ECO:0000255" key="1">
    <source>
        <dbReference type="HAMAP-Rule" id="MF_04068"/>
    </source>
</evidence>
<gene>
    <name evidence="1" type="primary">M</name>
</gene>
<reference key="1">
    <citation type="submission" date="2001-02" db="EMBL/GenBank/DDBJ databases">
        <authorList>
            <person name="Brown E.G."/>
            <person name="Liu H."/>
            <person name="Baird S."/>
            <person name="Chang Kit L."/>
            <person name="Nesrallah M."/>
        </authorList>
    </citation>
    <scope>NUCLEOTIDE SEQUENCE [GENOMIC RNA]</scope>
    <source>
        <strain>Isolate mouse-adapted</strain>
        <strain>Isolate wild-type</strain>
    </source>
</reference>
<reference key="2">
    <citation type="submission" date="1994-04" db="EMBL/GenBank/DDBJ databases">
        <authorList>
            <person name="Ward A.C."/>
        </authorList>
    </citation>
    <scope>NUCLEOTIDE SEQUENCE [MRNA]</scope>
    <source>
        <strain>Isolate A/Philippines/2/82/BS</strain>
    </source>
</reference>
<proteinExistence type="evidence at transcript level"/>
<accession>Q8QV58</accession>
<accession>Q8QV56</accession>
<name>M1_I82A9</name>
<sequence length="252" mass="27804">MSLLTEVETYVLSIVPSGPLKAEIAQRLEDVFAGKNTDLEALTEWLKTRPILSPLTKGILGFVFTLTVPSERGLQRRRFVQNALNGNGDPNNMDRAVKLYRKLKREITFHGAKEIALSYSAGALASCMGLIYNRMGAVTTEVAFGLVCATCEQIADSQHRSHRQMVATTNPLIRHENRMVLASTTAKAMEQMAGSSEQAAEAMEVASQARQMVQAMRAIGTHPSSSAGLKDDLLENLQTYQKRMGVQMQRFK</sequence>
<organismHost>
    <name type="scientific">Aves</name>
    <dbReference type="NCBI Taxonomy" id="8782"/>
</organismHost>
<organismHost>
    <name type="scientific">Cetacea</name>
    <name type="common">whales</name>
    <dbReference type="NCBI Taxonomy" id="9721"/>
</organismHost>
<organismHost>
    <name type="scientific">Homo sapiens</name>
    <name type="common">Human</name>
    <dbReference type="NCBI Taxonomy" id="9606"/>
</organismHost>
<organismHost>
    <name type="scientific">Phocidae</name>
    <name type="common">true seals</name>
    <dbReference type="NCBI Taxonomy" id="9709"/>
</organismHost>
<organismHost>
    <name type="scientific">Sus scrofa</name>
    <name type="common">Pig</name>
    <dbReference type="NCBI Taxonomy" id="9823"/>
</organismHost>
<dbReference type="EMBL" id="AF348912">
    <property type="protein sequence ID" value="AAM09296.1"/>
    <property type="molecule type" value="Genomic_RNA"/>
</dbReference>
<dbReference type="EMBL" id="AF348913">
    <property type="protein sequence ID" value="AAM09298.1"/>
    <property type="molecule type" value="Genomic_RNA"/>
</dbReference>
<dbReference type="EMBL" id="U08863">
    <property type="protein sequence ID" value="AAC79577.1"/>
    <property type="molecule type" value="mRNA"/>
</dbReference>
<dbReference type="SMR" id="Q8QV58"/>
<dbReference type="GO" id="GO:0042025">
    <property type="term" value="C:host cell nucleus"/>
    <property type="evidence" value="ECO:0007669"/>
    <property type="project" value="UniProtKB-SubCell"/>
</dbReference>
<dbReference type="GO" id="GO:0016020">
    <property type="term" value="C:membrane"/>
    <property type="evidence" value="ECO:0007669"/>
    <property type="project" value="UniProtKB-KW"/>
</dbReference>
<dbReference type="GO" id="GO:0055036">
    <property type="term" value="C:virion membrane"/>
    <property type="evidence" value="ECO:0007669"/>
    <property type="project" value="UniProtKB-SubCell"/>
</dbReference>
<dbReference type="GO" id="GO:0003723">
    <property type="term" value="F:RNA binding"/>
    <property type="evidence" value="ECO:0007669"/>
    <property type="project" value="UniProtKB-UniRule"/>
</dbReference>
<dbReference type="GO" id="GO:0039660">
    <property type="term" value="F:structural constituent of virion"/>
    <property type="evidence" value="ECO:0007669"/>
    <property type="project" value="UniProtKB-UniRule"/>
</dbReference>
<dbReference type="GO" id="GO:0046761">
    <property type="term" value="P:viral budding from plasma membrane"/>
    <property type="evidence" value="ECO:0007669"/>
    <property type="project" value="UniProtKB-UniRule"/>
</dbReference>
<dbReference type="FunFam" id="1.10.10.180:FF:000001">
    <property type="entry name" value="Matrix protein 1"/>
    <property type="match status" value="1"/>
</dbReference>
<dbReference type="FunFam" id="1.20.91.10:FF:000001">
    <property type="entry name" value="Matrix protein 1"/>
    <property type="match status" value="1"/>
</dbReference>
<dbReference type="Gene3D" id="1.10.10.180">
    <property type="match status" value="1"/>
</dbReference>
<dbReference type="Gene3D" id="1.20.91.10">
    <property type="match status" value="1"/>
</dbReference>
<dbReference type="HAMAP" id="MF_04068">
    <property type="entry name" value="INFV_M1"/>
    <property type="match status" value="1"/>
</dbReference>
<dbReference type="InterPro" id="IPR036039">
    <property type="entry name" value="Flu_matrix_M1"/>
</dbReference>
<dbReference type="InterPro" id="IPR013188">
    <property type="entry name" value="Flu_matrix_M1_C"/>
</dbReference>
<dbReference type="InterPro" id="IPR001561">
    <property type="entry name" value="Flu_matrix_M1_N"/>
</dbReference>
<dbReference type="InterPro" id="IPR015423">
    <property type="entry name" value="Flu_matrix_M1_N_sub1"/>
</dbReference>
<dbReference type="InterPro" id="IPR015799">
    <property type="entry name" value="Flu_matrix_M1_N_sub2"/>
</dbReference>
<dbReference type="InterPro" id="IPR037533">
    <property type="entry name" value="INFV_M1"/>
</dbReference>
<dbReference type="Pfam" id="PF00598">
    <property type="entry name" value="Flu_M1"/>
    <property type="match status" value="1"/>
</dbReference>
<dbReference type="Pfam" id="PF08289">
    <property type="entry name" value="Flu_M1_C"/>
    <property type="match status" value="1"/>
</dbReference>
<dbReference type="SMART" id="SM00759">
    <property type="entry name" value="Flu_M1_C"/>
    <property type="match status" value="1"/>
</dbReference>
<dbReference type="SUPFAM" id="SSF48145">
    <property type="entry name" value="Influenza virus matrix protein M1"/>
    <property type="match status" value="1"/>
</dbReference>
<keyword id="KW-0025">Alternative splicing</keyword>
<keyword id="KW-1048">Host nucleus</keyword>
<keyword id="KW-0472">Membrane</keyword>
<keyword id="KW-0694">RNA-binding</keyword>
<keyword id="KW-0468">Viral matrix protein</keyword>
<keyword id="KW-0946">Virion</keyword>
<organism>
    <name type="scientific">Influenza A virus (strain A/Philippines/2/1982 H3N2)</name>
    <dbReference type="NCBI Taxonomy" id="382825"/>
    <lineage>
        <taxon>Viruses</taxon>
        <taxon>Riboviria</taxon>
        <taxon>Orthornavirae</taxon>
        <taxon>Negarnaviricota</taxon>
        <taxon>Polyploviricotina</taxon>
        <taxon>Insthoviricetes</taxon>
        <taxon>Articulavirales</taxon>
        <taxon>Orthomyxoviridae</taxon>
        <taxon>Alphainfluenzavirus</taxon>
        <taxon>Alphainfluenzavirus influenzae</taxon>
        <taxon>Influenza A virus</taxon>
    </lineage>
</organism>